<dbReference type="EMBL" id="AP006618">
    <property type="protein sequence ID" value="BAD55638.1"/>
    <property type="molecule type" value="Genomic_DNA"/>
</dbReference>
<dbReference type="RefSeq" id="WP_011207324.1">
    <property type="nucleotide sequence ID" value="NC_006361.1"/>
</dbReference>
<dbReference type="SMR" id="Q5Z1Q3"/>
<dbReference type="STRING" id="247156.NFA_7930"/>
<dbReference type="GeneID" id="61131624"/>
<dbReference type="KEGG" id="nfa:NFA_7930"/>
<dbReference type="eggNOG" id="COG0200">
    <property type="taxonomic scope" value="Bacteria"/>
</dbReference>
<dbReference type="HOGENOM" id="CLU_055188_4_1_11"/>
<dbReference type="OrthoDB" id="9810293at2"/>
<dbReference type="Proteomes" id="UP000006820">
    <property type="component" value="Chromosome"/>
</dbReference>
<dbReference type="GO" id="GO:0022625">
    <property type="term" value="C:cytosolic large ribosomal subunit"/>
    <property type="evidence" value="ECO:0007669"/>
    <property type="project" value="TreeGrafter"/>
</dbReference>
<dbReference type="GO" id="GO:0019843">
    <property type="term" value="F:rRNA binding"/>
    <property type="evidence" value="ECO:0007669"/>
    <property type="project" value="UniProtKB-UniRule"/>
</dbReference>
<dbReference type="GO" id="GO:0003735">
    <property type="term" value="F:structural constituent of ribosome"/>
    <property type="evidence" value="ECO:0007669"/>
    <property type="project" value="InterPro"/>
</dbReference>
<dbReference type="GO" id="GO:0006412">
    <property type="term" value="P:translation"/>
    <property type="evidence" value="ECO:0007669"/>
    <property type="project" value="UniProtKB-UniRule"/>
</dbReference>
<dbReference type="FunFam" id="3.100.10.10:FF:000005">
    <property type="entry name" value="50S ribosomal protein L15"/>
    <property type="match status" value="1"/>
</dbReference>
<dbReference type="Gene3D" id="3.100.10.10">
    <property type="match status" value="1"/>
</dbReference>
<dbReference type="HAMAP" id="MF_01341">
    <property type="entry name" value="Ribosomal_uL15"/>
    <property type="match status" value="1"/>
</dbReference>
<dbReference type="InterPro" id="IPR030878">
    <property type="entry name" value="Ribosomal_uL15"/>
</dbReference>
<dbReference type="InterPro" id="IPR021131">
    <property type="entry name" value="Ribosomal_uL15/eL18"/>
</dbReference>
<dbReference type="InterPro" id="IPR036227">
    <property type="entry name" value="Ribosomal_uL15/eL18_sf"/>
</dbReference>
<dbReference type="InterPro" id="IPR005749">
    <property type="entry name" value="Ribosomal_uL15_bac-type"/>
</dbReference>
<dbReference type="InterPro" id="IPR001196">
    <property type="entry name" value="Ribosomal_uL15_CS"/>
</dbReference>
<dbReference type="NCBIfam" id="TIGR01071">
    <property type="entry name" value="rplO_bact"/>
    <property type="match status" value="1"/>
</dbReference>
<dbReference type="PANTHER" id="PTHR12934">
    <property type="entry name" value="50S RIBOSOMAL PROTEIN L15"/>
    <property type="match status" value="1"/>
</dbReference>
<dbReference type="PANTHER" id="PTHR12934:SF11">
    <property type="entry name" value="LARGE RIBOSOMAL SUBUNIT PROTEIN UL15M"/>
    <property type="match status" value="1"/>
</dbReference>
<dbReference type="Pfam" id="PF00828">
    <property type="entry name" value="Ribosomal_L27A"/>
    <property type="match status" value="1"/>
</dbReference>
<dbReference type="SUPFAM" id="SSF52080">
    <property type="entry name" value="Ribosomal proteins L15p and L18e"/>
    <property type="match status" value="1"/>
</dbReference>
<dbReference type="PROSITE" id="PS00475">
    <property type="entry name" value="RIBOSOMAL_L15"/>
    <property type="match status" value="1"/>
</dbReference>
<comment type="function">
    <text evidence="1">Binds to the 23S rRNA.</text>
</comment>
<comment type="subunit">
    <text evidence="1">Part of the 50S ribosomal subunit.</text>
</comment>
<comment type="similarity">
    <text evidence="1">Belongs to the universal ribosomal protein uL15 family.</text>
</comment>
<evidence type="ECO:0000255" key="1">
    <source>
        <dbReference type="HAMAP-Rule" id="MF_01341"/>
    </source>
</evidence>
<evidence type="ECO:0000256" key="2">
    <source>
        <dbReference type="SAM" id="MobiDB-lite"/>
    </source>
</evidence>
<evidence type="ECO:0000305" key="3"/>
<proteinExistence type="inferred from homology"/>
<sequence length="147" mass="15342">MTIKLHHLRPAPGAKTDKTRVGRGEGSKGKTAGRGTKGTKARKNVPAAFEGGQMPIHMRLPKLKGFTNKFRTEYQVVNVGRIAELFPQGGTVGKAELVAAGAVRKNQLVKVLGDGEIGVAVQVTADKVTGSAKEKITAAGGTVTELA</sequence>
<accession>Q5Z1Q3</accession>
<keyword id="KW-1185">Reference proteome</keyword>
<keyword id="KW-0687">Ribonucleoprotein</keyword>
<keyword id="KW-0689">Ribosomal protein</keyword>
<keyword id="KW-0694">RNA-binding</keyword>
<keyword id="KW-0699">rRNA-binding</keyword>
<reference key="1">
    <citation type="journal article" date="2004" name="Proc. Natl. Acad. Sci. U.S.A.">
        <title>The complete genomic sequence of Nocardia farcinica IFM 10152.</title>
        <authorList>
            <person name="Ishikawa J."/>
            <person name="Yamashita A."/>
            <person name="Mikami Y."/>
            <person name="Hoshino Y."/>
            <person name="Kurita H."/>
            <person name="Hotta K."/>
            <person name="Shiba T."/>
            <person name="Hattori M."/>
        </authorList>
    </citation>
    <scope>NUCLEOTIDE SEQUENCE [LARGE SCALE GENOMIC DNA]</scope>
    <source>
        <strain>IFM 10152</strain>
    </source>
</reference>
<gene>
    <name evidence="1" type="primary">rplO</name>
    <name type="ordered locus">NFA_7930</name>
</gene>
<organism>
    <name type="scientific">Nocardia farcinica (strain IFM 10152)</name>
    <dbReference type="NCBI Taxonomy" id="247156"/>
    <lineage>
        <taxon>Bacteria</taxon>
        <taxon>Bacillati</taxon>
        <taxon>Actinomycetota</taxon>
        <taxon>Actinomycetes</taxon>
        <taxon>Mycobacteriales</taxon>
        <taxon>Nocardiaceae</taxon>
        <taxon>Nocardia</taxon>
    </lineage>
</organism>
<name>RL15_NOCFA</name>
<protein>
    <recommendedName>
        <fullName evidence="1">Large ribosomal subunit protein uL15</fullName>
    </recommendedName>
    <alternativeName>
        <fullName evidence="3">50S ribosomal protein L15</fullName>
    </alternativeName>
</protein>
<feature type="chain" id="PRO_0000104772" description="Large ribosomal subunit protein uL15">
    <location>
        <begin position="1"/>
        <end position="147"/>
    </location>
</feature>
<feature type="region of interest" description="Disordered" evidence="2">
    <location>
        <begin position="1"/>
        <end position="42"/>
    </location>
</feature>
<feature type="compositionally biased region" description="Basic and acidic residues" evidence="2">
    <location>
        <begin position="15"/>
        <end position="28"/>
    </location>
</feature>